<accession>Q02141</accession>
<keyword id="KW-0028">Amino-acid biosynthesis</keyword>
<keyword id="KW-0100">Branched-chain amino acid biosynthesis</keyword>
<keyword id="KW-0963">Cytoplasm</keyword>
<keyword id="KW-0432">Leucine biosynthesis</keyword>
<keyword id="KW-0464">Manganese</keyword>
<keyword id="KW-0479">Metal-binding</keyword>
<keyword id="KW-1185">Reference proteome</keyword>
<keyword id="KW-0808">Transferase</keyword>
<sequence length="513" mass="55803">MRKIEFFDTSLRDGEQTPGVSFSISEKVTIAKQLEKWRISVIEAGFSAASPDSFEAVKQIADSLNDTAVTALARCVISDIDKAVEAVKGAKYPQIHVFIATSPIHMKYKLKISPEEVLKNIDKCVRYARERVEVVEFSPEDATRTELNFLLEAVQTAVDAGATYINIPDTVGYTTPEEYGKIFKFLIDNTKSDREIIFSPHCHDDLGMAVANSLAAIKAGAGRVEGTVNGIGERAGNAALEEIAVALHIRKDFYQAQSPLKLSETAATAELISQFSGIAIPKNKAIVGANAFAHESGIHQDGVLKNAETYEIITPELVGIKHNSLPLGKLSGRHAFSEKLTELNIAYDDESLAILFEKFKKLADKKKEITDADIHALFTGETVKNLAGFILDNVQIDGHKALVQLKNQEEEIYVSQGEGSGSVDAIFKAIDKVFNHQLKLISYSVDAVTDGIDAQATTLVSVENLSTGTIFNAKGVDYDVLKGSAIAYMNANVLVQKENLQGKVEQISAHDGI</sequence>
<proteinExistence type="inferred from homology"/>
<name>LEU1_LACLA</name>
<protein>
    <recommendedName>
        <fullName evidence="1">2-isopropylmalate synthase</fullName>
        <ecNumber evidence="1">2.3.3.13</ecNumber>
    </recommendedName>
    <alternativeName>
        <fullName evidence="1">Alpha-IPM synthase</fullName>
    </alternativeName>
    <alternativeName>
        <fullName evidence="1">Alpha-isopropylmalate synthase</fullName>
    </alternativeName>
</protein>
<reference key="1">
    <citation type="journal article" date="1992" name="J. Bacteriol.">
        <title>Branched-chain amino acid biosynthesis genes in Lactococcus lactis subsp. lactis.</title>
        <authorList>
            <person name="Godon J.-J."/>
            <person name="Chopin M.-C."/>
            <person name="Ehrlich S.D."/>
        </authorList>
    </citation>
    <scope>NUCLEOTIDE SEQUENCE [GENOMIC DNA]</scope>
    <source>
        <strain>NCDO 2118</strain>
    </source>
</reference>
<reference key="2">
    <citation type="journal article" date="1993" name="J. Bacteriol.">
        <title>Gene inactivation in Lactococcus lactis: branched-chain amino acid biosynthesis.</title>
        <authorList>
            <person name="Godon J.-J."/>
            <person name="Delorme C."/>
            <person name="Bardowski J."/>
            <person name="Chopin M.-C."/>
            <person name="Ehrlich S.D."/>
            <person name="Renault P."/>
        </authorList>
    </citation>
    <scope>NUCLEOTIDE SEQUENCE [GENOMIC DNA]</scope>
    <source>
        <strain>IL1403</strain>
    </source>
</reference>
<reference key="3">
    <citation type="journal article" date="2001" name="Genome Res.">
        <title>The complete genome sequence of the lactic acid bacterium Lactococcus lactis ssp. lactis IL1403.</title>
        <authorList>
            <person name="Bolotin A."/>
            <person name="Wincker P."/>
            <person name="Mauger S."/>
            <person name="Jaillon O."/>
            <person name="Malarme K."/>
            <person name="Weissenbach J."/>
            <person name="Ehrlich S.D."/>
            <person name="Sorokin A."/>
        </authorList>
    </citation>
    <scope>NUCLEOTIDE SEQUENCE [LARGE SCALE GENOMIC DNA]</scope>
    <source>
        <strain>IL1403</strain>
    </source>
</reference>
<gene>
    <name evidence="1" type="primary">leuA</name>
    <name type="ordered locus">LL1217.1</name>
</gene>
<dbReference type="EC" id="2.3.3.13" evidence="1"/>
<dbReference type="EMBL" id="U92974">
    <property type="protein sequence ID" value="AAB81913.1"/>
    <property type="status" value="ALT_INIT"/>
    <property type="molecule type" value="Genomic_DNA"/>
</dbReference>
<dbReference type="EMBL" id="AE005176">
    <property type="status" value="NOT_ANNOTATED_CDS"/>
    <property type="molecule type" value="Genomic_DNA"/>
</dbReference>
<dbReference type="PIR" id="S35132">
    <property type="entry name" value="S35132"/>
</dbReference>
<dbReference type="SMR" id="Q02141"/>
<dbReference type="UniPathway" id="UPA00048">
    <property type="reaction ID" value="UER00070"/>
</dbReference>
<dbReference type="Proteomes" id="UP000002196">
    <property type="component" value="Chromosome"/>
</dbReference>
<dbReference type="GO" id="GO:0005737">
    <property type="term" value="C:cytoplasm"/>
    <property type="evidence" value="ECO:0007669"/>
    <property type="project" value="UniProtKB-SubCell"/>
</dbReference>
<dbReference type="GO" id="GO:0003852">
    <property type="term" value="F:2-isopropylmalate synthase activity"/>
    <property type="evidence" value="ECO:0007669"/>
    <property type="project" value="UniProtKB-UniRule"/>
</dbReference>
<dbReference type="GO" id="GO:0003985">
    <property type="term" value="F:acetyl-CoA C-acetyltransferase activity"/>
    <property type="evidence" value="ECO:0007669"/>
    <property type="project" value="UniProtKB-UniRule"/>
</dbReference>
<dbReference type="GO" id="GO:0030145">
    <property type="term" value="F:manganese ion binding"/>
    <property type="evidence" value="ECO:0007669"/>
    <property type="project" value="UniProtKB-UniRule"/>
</dbReference>
<dbReference type="GO" id="GO:0009098">
    <property type="term" value="P:L-leucine biosynthetic process"/>
    <property type="evidence" value="ECO:0007669"/>
    <property type="project" value="UniProtKB-UniRule"/>
</dbReference>
<dbReference type="CDD" id="cd07940">
    <property type="entry name" value="DRE_TIM_IPMS"/>
    <property type="match status" value="1"/>
</dbReference>
<dbReference type="FunFam" id="1.10.238.260:FF:000001">
    <property type="entry name" value="2-isopropylmalate synthase"/>
    <property type="match status" value="1"/>
</dbReference>
<dbReference type="FunFam" id="3.20.20.70:FF:000010">
    <property type="entry name" value="2-isopropylmalate synthase"/>
    <property type="match status" value="1"/>
</dbReference>
<dbReference type="Gene3D" id="1.10.238.260">
    <property type="match status" value="1"/>
</dbReference>
<dbReference type="Gene3D" id="3.30.160.270">
    <property type="match status" value="1"/>
</dbReference>
<dbReference type="Gene3D" id="3.20.20.70">
    <property type="entry name" value="Aldolase class I"/>
    <property type="match status" value="1"/>
</dbReference>
<dbReference type="HAMAP" id="MF_01025">
    <property type="entry name" value="LeuA_type1"/>
    <property type="match status" value="1"/>
</dbReference>
<dbReference type="InterPro" id="IPR050073">
    <property type="entry name" value="2-IPM_HCS-like"/>
</dbReference>
<dbReference type="InterPro" id="IPR013709">
    <property type="entry name" value="2-isopropylmalate_synth_dimer"/>
</dbReference>
<dbReference type="InterPro" id="IPR002034">
    <property type="entry name" value="AIPM/Hcit_synth_CS"/>
</dbReference>
<dbReference type="InterPro" id="IPR013785">
    <property type="entry name" value="Aldolase_TIM"/>
</dbReference>
<dbReference type="InterPro" id="IPR054691">
    <property type="entry name" value="LeuA/HCS_post-cat"/>
</dbReference>
<dbReference type="InterPro" id="IPR036230">
    <property type="entry name" value="LeuA_allosteric_dom_sf"/>
</dbReference>
<dbReference type="InterPro" id="IPR005671">
    <property type="entry name" value="LeuA_bact_synth"/>
</dbReference>
<dbReference type="InterPro" id="IPR000891">
    <property type="entry name" value="PYR_CT"/>
</dbReference>
<dbReference type="NCBIfam" id="TIGR00973">
    <property type="entry name" value="leuA_bact"/>
    <property type="match status" value="1"/>
</dbReference>
<dbReference type="NCBIfam" id="NF002086">
    <property type="entry name" value="PRK00915.1-3"/>
    <property type="match status" value="1"/>
</dbReference>
<dbReference type="NCBIfam" id="NF002088">
    <property type="entry name" value="PRK00915.1-5"/>
    <property type="match status" value="1"/>
</dbReference>
<dbReference type="PANTHER" id="PTHR10277:SF9">
    <property type="entry name" value="2-ISOPROPYLMALATE SYNTHASE 1, CHLOROPLASTIC-RELATED"/>
    <property type="match status" value="1"/>
</dbReference>
<dbReference type="PANTHER" id="PTHR10277">
    <property type="entry name" value="HOMOCITRATE SYNTHASE-RELATED"/>
    <property type="match status" value="1"/>
</dbReference>
<dbReference type="Pfam" id="PF22617">
    <property type="entry name" value="HCS_D2"/>
    <property type="match status" value="1"/>
</dbReference>
<dbReference type="Pfam" id="PF00682">
    <property type="entry name" value="HMGL-like"/>
    <property type="match status" value="1"/>
</dbReference>
<dbReference type="Pfam" id="PF08502">
    <property type="entry name" value="LeuA_dimer"/>
    <property type="match status" value="1"/>
</dbReference>
<dbReference type="SMART" id="SM00917">
    <property type="entry name" value="LeuA_dimer"/>
    <property type="match status" value="1"/>
</dbReference>
<dbReference type="SUPFAM" id="SSF110921">
    <property type="entry name" value="2-isopropylmalate synthase LeuA, allosteric (dimerisation) domain"/>
    <property type="match status" value="1"/>
</dbReference>
<dbReference type="SUPFAM" id="SSF51569">
    <property type="entry name" value="Aldolase"/>
    <property type="match status" value="1"/>
</dbReference>
<dbReference type="PROSITE" id="PS00815">
    <property type="entry name" value="AIPM_HOMOCIT_SYNTH_1"/>
    <property type="match status" value="1"/>
</dbReference>
<dbReference type="PROSITE" id="PS00816">
    <property type="entry name" value="AIPM_HOMOCIT_SYNTH_2"/>
    <property type="match status" value="1"/>
</dbReference>
<dbReference type="PROSITE" id="PS50991">
    <property type="entry name" value="PYR_CT"/>
    <property type="match status" value="1"/>
</dbReference>
<evidence type="ECO:0000255" key="1">
    <source>
        <dbReference type="HAMAP-Rule" id="MF_01025"/>
    </source>
</evidence>
<evidence type="ECO:0000305" key="2"/>
<feature type="chain" id="PRO_0000140356" description="2-isopropylmalate synthase">
    <location>
        <begin position="1"/>
        <end position="513"/>
    </location>
</feature>
<feature type="domain" description="Pyruvate carboxyltransferase" evidence="1">
    <location>
        <begin position="4"/>
        <end position="266"/>
    </location>
</feature>
<feature type="region of interest" description="Regulatory domain" evidence="1">
    <location>
        <begin position="390"/>
        <end position="513"/>
    </location>
</feature>
<feature type="binding site" evidence="1">
    <location>
        <position position="13"/>
    </location>
    <ligand>
        <name>Mn(2+)</name>
        <dbReference type="ChEBI" id="CHEBI:29035"/>
    </ligand>
</feature>
<feature type="binding site" evidence="1">
    <location>
        <position position="201"/>
    </location>
    <ligand>
        <name>Mn(2+)</name>
        <dbReference type="ChEBI" id="CHEBI:29035"/>
    </ligand>
</feature>
<feature type="binding site" evidence="1">
    <location>
        <position position="203"/>
    </location>
    <ligand>
        <name>Mn(2+)</name>
        <dbReference type="ChEBI" id="CHEBI:29035"/>
    </ligand>
</feature>
<feature type="binding site" evidence="1">
    <location>
        <position position="237"/>
    </location>
    <ligand>
        <name>Mn(2+)</name>
        <dbReference type="ChEBI" id="CHEBI:29035"/>
    </ligand>
</feature>
<feature type="sequence variant" description="In strain: IL1403.">
    <original>S</original>
    <variation>C</variation>
    <location>
        <position position="23"/>
    </location>
</feature>
<feature type="sequence variant" description="In strain: IL1403.">
    <original>R</original>
    <variation>G</variation>
    <location>
        <position position="38"/>
    </location>
</feature>
<feature type="sequence variant" description="In strain: IL1403.">
    <original>R</original>
    <variation>K</variation>
    <location>
        <position position="126"/>
    </location>
</feature>
<feature type="sequence variant" description="In strain: IL1403.">
    <original>D</original>
    <variation>E</variation>
    <location>
        <position position="193"/>
    </location>
</feature>
<feature type="sequence variant" description="In strain: IL1403.">
    <original>G</original>
    <variation>V</variation>
    <location>
        <position position="297"/>
    </location>
</feature>
<feature type="sequence variant" description="In strain: IL1403.">
    <original>EIYVSQGEGSGSV</original>
    <variation>GAGSL</variation>
    <location>
        <begin position="411"/>
        <end position="423"/>
    </location>
</feature>
<feature type="sequence conflict" description="In Ref. 3; AE005176." evidence="2" ref="3">
    <original>S</original>
    <variation>P</variation>
    <location>
        <position position="47"/>
    </location>
</feature>
<feature type="sequence conflict" description="In Ref. 2; no nucleotide entry." evidence="2" ref="2">
    <original>H</original>
    <variation>Q</variation>
    <location>
        <position position="375"/>
    </location>
</feature>
<comment type="function">
    <text evidence="1">Catalyzes the condensation of the acetyl group of acetyl-CoA with 3-methyl-2-oxobutanoate (2-ketoisovalerate) to form 3-carboxy-3-hydroxy-4-methylpentanoate (2-isopropylmalate).</text>
</comment>
<comment type="catalytic activity">
    <reaction evidence="1">
        <text>3-methyl-2-oxobutanoate + acetyl-CoA + H2O = (2S)-2-isopropylmalate + CoA + H(+)</text>
        <dbReference type="Rhea" id="RHEA:21524"/>
        <dbReference type="ChEBI" id="CHEBI:1178"/>
        <dbReference type="ChEBI" id="CHEBI:11851"/>
        <dbReference type="ChEBI" id="CHEBI:15377"/>
        <dbReference type="ChEBI" id="CHEBI:15378"/>
        <dbReference type="ChEBI" id="CHEBI:57287"/>
        <dbReference type="ChEBI" id="CHEBI:57288"/>
        <dbReference type="EC" id="2.3.3.13"/>
    </reaction>
</comment>
<comment type="cofactor">
    <cofactor evidence="1">
        <name>Mn(2+)</name>
        <dbReference type="ChEBI" id="CHEBI:29035"/>
    </cofactor>
</comment>
<comment type="pathway">
    <text evidence="1">Amino-acid biosynthesis; L-leucine biosynthesis; L-leucine from 3-methyl-2-oxobutanoate: step 1/4.</text>
</comment>
<comment type="subunit">
    <text evidence="1">Homodimer.</text>
</comment>
<comment type="subcellular location">
    <subcellularLocation>
        <location evidence="1">Cytoplasm</location>
    </subcellularLocation>
</comment>
<comment type="similarity">
    <text evidence="1 2">Belongs to the alpha-IPM synthase/homocitrate synthase family. LeuA type 1 subfamily.</text>
</comment>
<comment type="sequence caution" evidence="2">
    <conflict type="erroneous initiation">
        <sequence resource="EMBL-CDS" id="AAB81913"/>
    </conflict>
    <text>Extended N-terminus.</text>
</comment>
<comment type="sequence caution" evidence="2">
    <conflict type="erroneous termination">
        <sequence resource="EMBL" id="AE005176"/>
    </conflict>
    <text>Truncated C-terminus. The resulting protein is truncated and inactive in the dairy strain IL1403, where the leucine biosynthesis pathway is not functional.</text>
</comment>
<organism>
    <name type="scientific">Lactococcus lactis subsp. lactis (strain IL1403)</name>
    <name type="common">Streptococcus lactis</name>
    <dbReference type="NCBI Taxonomy" id="272623"/>
    <lineage>
        <taxon>Bacteria</taxon>
        <taxon>Bacillati</taxon>
        <taxon>Bacillota</taxon>
        <taxon>Bacilli</taxon>
        <taxon>Lactobacillales</taxon>
        <taxon>Streptococcaceae</taxon>
        <taxon>Lactococcus</taxon>
    </lineage>
</organism>